<name>COMB_THET8</name>
<dbReference type="EC" id="3.1.3.71" evidence="1"/>
<dbReference type="EMBL" id="AP008226">
    <property type="protein sequence ID" value="BAD71261.1"/>
    <property type="molecule type" value="Genomic_DNA"/>
</dbReference>
<dbReference type="RefSeq" id="WP_008632942.1">
    <property type="nucleotide sequence ID" value="NC_006461.1"/>
</dbReference>
<dbReference type="RefSeq" id="YP_144704.1">
    <property type="nucleotide sequence ID" value="NC_006461.1"/>
</dbReference>
<dbReference type="PDB" id="2Z0J">
    <property type="method" value="X-ray"/>
    <property type="resolution" value="1.50 A"/>
    <property type="chains" value="A/B/C/D/E/F/G/H=1-237"/>
</dbReference>
<dbReference type="PDBsum" id="2Z0J"/>
<dbReference type="SMR" id="Q5SID6"/>
<dbReference type="EnsemblBacteria" id="BAD71261">
    <property type="protein sequence ID" value="BAD71261"/>
    <property type="gene ID" value="BAD71261"/>
</dbReference>
<dbReference type="GeneID" id="3168156"/>
<dbReference type="KEGG" id="ttj:TTHA1438"/>
<dbReference type="PATRIC" id="fig|300852.9.peg.1412"/>
<dbReference type="eggNOG" id="COG2045">
    <property type="taxonomic scope" value="Bacteria"/>
</dbReference>
<dbReference type="HOGENOM" id="CLU_070028_0_0_0"/>
<dbReference type="EvolutionaryTrace" id="Q5SID6"/>
<dbReference type="Proteomes" id="UP000000532">
    <property type="component" value="Chromosome"/>
</dbReference>
<dbReference type="GO" id="GO:0050532">
    <property type="term" value="F:2-phosphosulfolactate phosphatase activity"/>
    <property type="evidence" value="ECO:0007669"/>
    <property type="project" value="UniProtKB-UniRule"/>
</dbReference>
<dbReference type="GO" id="GO:0000287">
    <property type="term" value="F:magnesium ion binding"/>
    <property type="evidence" value="ECO:0007669"/>
    <property type="project" value="UniProtKB-UniRule"/>
</dbReference>
<dbReference type="GO" id="GO:0050545">
    <property type="term" value="F:sulfopyruvate decarboxylase activity"/>
    <property type="evidence" value="ECO:0007669"/>
    <property type="project" value="TreeGrafter"/>
</dbReference>
<dbReference type="Gene3D" id="3.90.1560.10">
    <property type="entry name" value="ComB-like"/>
    <property type="match status" value="1"/>
</dbReference>
<dbReference type="HAMAP" id="MF_00490">
    <property type="entry name" value="ComB"/>
    <property type="match status" value="1"/>
</dbReference>
<dbReference type="InterPro" id="IPR005238">
    <property type="entry name" value="ComB-like"/>
</dbReference>
<dbReference type="InterPro" id="IPR036702">
    <property type="entry name" value="ComB-like_sf"/>
</dbReference>
<dbReference type="NCBIfam" id="NF010700">
    <property type="entry name" value="PRK14100.1"/>
    <property type="match status" value="1"/>
</dbReference>
<dbReference type="PANTHER" id="PTHR37311">
    <property type="entry name" value="2-PHOSPHOSULFOLACTATE PHOSPHATASE-RELATED"/>
    <property type="match status" value="1"/>
</dbReference>
<dbReference type="PANTHER" id="PTHR37311:SF1">
    <property type="entry name" value="2-PHOSPHOSULFOLACTATE PHOSPHATASE-RELATED"/>
    <property type="match status" value="1"/>
</dbReference>
<dbReference type="Pfam" id="PF04029">
    <property type="entry name" value="2-ph_phosp"/>
    <property type="match status" value="1"/>
</dbReference>
<dbReference type="SUPFAM" id="SSF142823">
    <property type="entry name" value="ComB-like"/>
    <property type="match status" value="1"/>
</dbReference>
<comment type="catalytic activity">
    <reaction evidence="1">
        <text>(2R)-O-phospho-3-sulfolactate + H2O = (2R)-3-sulfolactate + phosphate</text>
        <dbReference type="Rhea" id="RHEA:23416"/>
        <dbReference type="ChEBI" id="CHEBI:15377"/>
        <dbReference type="ChEBI" id="CHEBI:15597"/>
        <dbReference type="ChEBI" id="CHEBI:43474"/>
        <dbReference type="ChEBI" id="CHEBI:58738"/>
        <dbReference type="EC" id="3.1.3.71"/>
    </reaction>
</comment>
<comment type="cofactor">
    <cofactor evidence="1">
        <name>Mg(2+)</name>
        <dbReference type="ChEBI" id="CHEBI:18420"/>
    </cofactor>
</comment>
<comment type="similarity">
    <text evidence="1">Belongs to the ComB family.</text>
</comment>
<evidence type="ECO:0000255" key="1">
    <source>
        <dbReference type="HAMAP-Rule" id="MF_00490"/>
    </source>
</evidence>
<evidence type="ECO:0007829" key="2">
    <source>
        <dbReference type="PDB" id="2Z0J"/>
    </source>
</evidence>
<sequence length="237" mass="24738">MRLRVDVIPGEHLAYPDVVLVVDVIRATTTAAAFLEAGAEALYWTPSLESALAFKDEDVVLAGETGGLKPPRFDLGNSPREALSAQVAGRVVVMSTTNGTKAAHAAARTAKHVLLASLYNAHAAARLARELATEEVAILCAGKEGRAGLDDLYTAGVLAEYLGFLGEVEPEDGARVALAVKRAYPDPLEALSLSAAALALKQVGLEADVPFCAQVAKSAAVPVLRGRVGEALIFKRA</sequence>
<accession>Q5SID6</accession>
<organism>
    <name type="scientific">Thermus thermophilus (strain ATCC 27634 / DSM 579 / HB8)</name>
    <dbReference type="NCBI Taxonomy" id="300852"/>
    <lineage>
        <taxon>Bacteria</taxon>
        <taxon>Thermotogati</taxon>
        <taxon>Deinococcota</taxon>
        <taxon>Deinococci</taxon>
        <taxon>Thermales</taxon>
        <taxon>Thermaceae</taxon>
        <taxon>Thermus</taxon>
    </lineage>
</organism>
<reference key="1">
    <citation type="submission" date="2004-11" db="EMBL/GenBank/DDBJ databases">
        <title>Complete genome sequence of Thermus thermophilus HB8.</title>
        <authorList>
            <person name="Masui R."/>
            <person name="Kurokawa K."/>
            <person name="Nakagawa N."/>
            <person name="Tokunaga F."/>
            <person name="Koyama Y."/>
            <person name="Shibata T."/>
            <person name="Oshima T."/>
            <person name="Yokoyama S."/>
            <person name="Yasunaga T."/>
            <person name="Kuramitsu S."/>
        </authorList>
    </citation>
    <scope>NUCLEOTIDE SEQUENCE [LARGE SCALE GENOMIC DNA]</scope>
    <source>
        <strain>ATCC 27634 / DSM 579 / HB8</strain>
    </source>
</reference>
<protein>
    <recommendedName>
        <fullName evidence="1">Probable 2-phosphosulfolactate phosphatase</fullName>
        <ecNumber evidence="1">3.1.3.71</ecNumber>
    </recommendedName>
</protein>
<keyword id="KW-0002">3D-structure</keyword>
<keyword id="KW-0378">Hydrolase</keyword>
<keyword id="KW-0460">Magnesium</keyword>
<keyword id="KW-1185">Reference proteome</keyword>
<gene>
    <name evidence="1" type="primary">comB</name>
    <name type="ordered locus">TTHA1438</name>
</gene>
<feature type="chain" id="PRO_1000014477" description="Probable 2-phosphosulfolactate phosphatase">
    <location>
        <begin position="1"/>
        <end position="237"/>
    </location>
</feature>
<feature type="strand" evidence="2">
    <location>
        <begin position="2"/>
        <end position="8"/>
    </location>
</feature>
<feature type="strand" evidence="2">
    <location>
        <begin position="16"/>
        <end position="22"/>
    </location>
</feature>
<feature type="turn" evidence="2">
    <location>
        <begin position="24"/>
        <end position="26"/>
    </location>
</feature>
<feature type="helix" evidence="2">
    <location>
        <begin position="27"/>
        <end position="36"/>
    </location>
</feature>
<feature type="strand" evidence="2">
    <location>
        <begin position="40"/>
        <end position="44"/>
    </location>
</feature>
<feature type="helix" evidence="2">
    <location>
        <begin position="48"/>
        <end position="52"/>
    </location>
</feature>
<feature type="strand" evidence="2">
    <location>
        <begin position="60"/>
        <end position="63"/>
    </location>
</feature>
<feature type="helix" evidence="2">
    <location>
        <begin position="79"/>
        <end position="84"/>
    </location>
</feature>
<feature type="strand" evidence="2">
    <location>
        <begin position="90"/>
        <end position="95"/>
    </location>
</feature>
<feature type="helix" evidence="2">
    <location>
        <begin position="99"/>
        <end position="107"/>
    </location>
</feature>
<feature type="strand" evidence="2">
    <location>
        <begin position="111"/>
        <end position="116"/>
    </location>
</feature>
<feature type="helix" evidence="2">
    <location>
        <begin position="121"/>
        <end position="131"/>
    </location>
</feature>
<feature type="strand" evidence="2">
    <location>
        <begin position="133"/>
        <end position="140"/>
    </location>
</feature>
<feature type="helix" evidence="2">
    <location>
        <begin position="149"/>
        <end position="164"/>
    </location>
</feature>
<feature type="helix" evidence="2">
    <location>
        <begin position="172"/>
        <end position="183"/>
    </location>
</feature>
<feature type="helix" evidence="2">
    <location>
        <begin position="187"/>
        <end position="192"/>
    </location>
</feature>
<feature type="helix" evidence="2">
    <location>
        <begin position="195"/>
        <end position="202"/>
    </location>
</feature>
<feature type="helix" evidence="2">
    <location>
        <begin position="208"/>
        <end position="212"/>
    </location>
</feature>
<feature type="strand" evidence="2">
    <location>
        <begin position="222"/>
        <end position="228"/>
    </location>
</feature>
<feature type="strand" evidence="2">
    <location>
        <begin position="231"/>
        <end position="236"/>
    </location>
</feature>
<proteinExistence type="evidence at protein level"/>